<keyword id="KW-1185">Reference proteome</keyword>
<reference key="1">
    <citation type="submission" date="1997-11" db="EMBL/GenBank/DDBJ databases">
        <title>Sequencing and characterisation of the region comprising XlyB, the second lytic enzyme of the defective prophage PBSX of Bacillus subtilis.</title>
        <authorList>
            <person name="da Silva E."/>
            <person name="Karamata D."/>
        </authorList>
    </citation>
    <scope>NUCLEOTIDE SEQUENCE [GENOMIC DNA]</scope>
    <source>
        <strain>168</strain>
    </source>
</reference>
<reference key="2">
    <citation type="journal article" date="1997" name="Nature">
        <title>The complete genome sequence of the Gram-positive bacterium Bacillus subtilis.</title>
        <authorList>
            <person name="Kunst F."/>
            <person name="Ogasawara N."/>
            <person name="Moszer I."/>
            <person name="Albertini A.M."/>
            <person name="Alloni G."/>
            <person name="Azevedo V."/>
            <person name="Bertero M.G."/>
            <person name="Bessieres P."/>
            <person name="Bolotin A."/>
            <person name="Borchert S."/>
            <person name="Borriss R."/>
            <person name="Boursier L."/>
            <person name="Brans A."/>
            <person name="Braun M."/>
            <person name="Brignell S.C."/>
            <person name="Bron S."/>
            <person name="Brouillet S."/>
            <person name="Bruschi C.V."/>
            <person name="Caldwell B."/>
            <person name="Capuano V."/>
            <person name="Carter N.M."/>
            <person name="Choi S.-K."/>
            <person name="Codani J.-J."/>
            <person name="Connerton I.F."/>
            <person name="Cummings N.J."/>
            <person name="Daniel R.A."/>
            <person name="Denizot F."/>
            <person name="Devine K.M."/>
            <person name="Duesterhoeft A."/>
            <person name="Ehrlich S.D."/>
            <person name="Emmerson P.T."/>
            <person name="Entian K.-D."/>
            <person name="Errington J."/>
            <person name="Fabret C."/>
            <person name="Ferrari E."/>
            <person name="Foulger D."/>
            <person name="Fritz C."/>
            <person name="Fujita M."/>
            <person name="Fujita Y."/>
            <person name="Fuma S."/>
            <person name="Galizzi A."/>
            <person name="Galleron N."/>
            <person name="Ghim S.-Y."/>
            <person name="Glaser P."/>
            <person name="Goffeau A."/>
            <person name="Golightly E.J."/>
            <person name="Grandi G."/>
            <person name="Guiseppi G."/>
            <person name="Guy B.J."/>
            <person name="Haga K."/>
            <person name="Haiech J."/>
            <person name="Harwood C.R."/>
            <person name="Henaut A."/>
            <person name="Hilbert H."/>
            <person name="Holsappel S."/>
            <person name="Hosono S."/>
            <person name="Hullo M.-F."/>
            <person name="Itaya M."/>
            <person name="Jones L.-M."/>
            <person name="Joris B."/>
            <person name="Karamata D."/>
            <person name="Kasahara Y."/>
            <person name="Klaerr-Blanchard M."/>
            <person name="Klein C."/>
            <person name="Kobayashi Y."/>
            <person name="Koetter P."/>
            <person name="Koningstein G."/>
            <person name="Krogh S."/>
            <person name="Kumano M."/>
            <person name="Kurita K."/>
            <person name="Lapidus A."/>
            <person name="Lardinois S."/>
            <person name="Lauber J."/>
            <person name="Lazarevic V."/>
            <person name="Lee S.-M."/>
            <person name="Levine A."/>
            <person name="Liu H."/>
            <person name="Masuda S."/>
            <person name="Mauel C."/>
            <person name="Medigue C."/>
            <person name="Medina N."/>
            <person name="Mellado R.P."/>
            <person name="Mizuno M."/>
            <person name="Moestl D."/>
            <person name="Nakai S."/>
            <person name="Noback M."/>
            <person name="Noone D."/>
            <person name="O'Reilly M."/>
            <person name="Ogawa K."/>
            <person name="Ogiwara A."/>
            <person name="Oudega B."/>
            <person name="Park S.-H."/>
            <person name="Parro V."/>
            <person name="Pohl T.M."/>
            <person name="Portetelle D."/>
            <person name="Porwollik S."/>
            <person name="Prescott A.M."/>
            <person name="Presecan E."/>
            <person name="Pujic P."/>
            <person name="Purnelle B."/>
            <person name="Rapoport G."/>
            <person name="Rey M."/>
            <person name="Reynolds S."/>
            <person name="Rieger M."/>
            <person name="Rivolta C."/>
            <person name="Rocha E."/>
            <person name="Roche B."/>
            <person name="Rose M."/>
            <person name="Sadaie Y."/>
            <person name="Sato T."/>
            <person name="Scanlan E."/>
            <person name="Schleich S."/>
            <person name="Schroeter R."/>
            <person name="Scoffone F."/>
            <person name="Sekiguchi J."/>
            <person name="Sekowska A."/>
            <person name="Seror S.J."/>
            <person name="Serror P."/>
            <person name="Shin B.-S."/>
            <person name="Soldo B."/>
            <person name="Sorokin A."/>
            <person name="Tacconi E."/>
            <person name="Takagi T."/>
            <person name="Takahashi H."/>
            <person name="Takemaru K."/>
            <person name="Takeuchi M."/>
            <person name="Tamakoshi A."/>
            <person name="Tanaka T."/>
            <person name="Terpstra P."/>
            <person name="Tognoni A."/>
            <person name="Tosato V."/>
            <person name="Uchiyama S."/>
            <person name="Vandenbol M."/>
            <person name="Vannier F."/>
            <person name="Vassarotti A."/>
            <person name="Viari A."/>
            <person name="Wambutt R."/>
            <person name="Wedler E."/>
            <person name="Wedler H."/>
            <person name="Weitzenegger T."/>
            <person name="Winters P."/>
            <person name="Wipat A."/>
            <person name="Yamamoto H."/>
            <person name="Yamane K."/>
            <person name="Yasumoto K."/>
            <person name="Yata K."/>
            <person name="Yoshida K."/>
            <person name="Yoshikawa H.-F."/>
            <person name="Zumstein E."/>
            <person name="Yoshikawa H."/>
            <person name="Danchin A."/>
        </authorList>
    </citation>
    <scope>NUCLEOTIDE SEQUENCE [LARGE SCALE GENOMIC DNA]</scope>
    <source>
        <strain>168</strain>
    </source>
</reference>
<reference key="3">
    <citation type="journal article" date="2009" name="Microbiology">
        <title>From a consortium sequence to a unified sequence: the Bacillus subtilis 168 reference genome a decade later.</title>
        <authorList>
            <person name="Barbe V."/>
            <person name="Cruveiller S."/>
            <person name="Kunst F."/>
            <person name="Lenoble P."/>
            <person name="Meurice G."/>
            <person name="Sekowska A."/>
            <person name="Vallenet D."/>
            <person name="Wang T."/>
            <person name="Moszer I."/>
            <person name="Medigue C."/>
            <person name="Danchin A."/>
        </authorList>
    </citation>
    <scope>SEQUENCE REVISION TO 153</scope>
</reference>
<reference key="4">
    <citation type="submission" date="1996-03" db="EMBL/GenBank/DDBJ databases">
        <authorList>
            <person name="Krogh S."/>
            <person name="O'Reilly M."/>
            <person name="Nolan N."/>
            <person name="Devine K.M."/>
        </authorList>
    </citation>
    <scope>NUCLEOTIDE SEQUENCE [GENOMIC DNA] OF 1-99</scope>
    <source>
        <strain>168</strain>
    </source>
</reference>
<reference key="5">
    <citation type="journal article" date="1994" name="J. Bacteriol.">
        <title>Genetic control of bacterial suicide: regulation of the induction of PBSX in Bacillus subtilis.</title>
        <authorList>
            <person name="McDonnell G.E."/>
            <person name="Wood H."/>
            <person name="Devine K.M."/>
            <person name="McConnell D.J."/>
        </authorList>
    </citation>
    <scope>NUCLEOTIDE SEQUENCE [GENOMIC DNA] OF 1-100</scope>
    <source>
        <strain>168 / SO113</strain>
    </source>
</reference>
<reference key="6">
    <citation type="journal article" date="1990" name="Gene">
        <title>Characterisation of a repressor gene (xre) and a temperature-sensitive allele from the Bacillus subtilis prophage, PBSX.</title>
        <authorList>
            <person name="Wood H.E."/>
            <person name="Devine K.M."/>
            <person name="McConnell D.J."/>
        </authorList>
    </citation>
    <scope>NUCLEOTIDE SEQUENCE [GENOMIC DNA] OF 1-100</scope>
</reference>
<gene>
    <name type="primary">xkdA</name>
    <name type="synonym">ykxA</name>
    <name type="ordered locus">BSU12500</name>
</gene>
<evidence type="ECO:0000305" key="1"/>
<comment type="similarity">
    <text evidence="1">To B.subtilis YqaB.</text>
</comment>
<comment type="sequence caution" evidence="1">
    <conflict type="erroneous initiation">
        <sequence resource="EMBL-CDS" id="AAB87518"/>
    </conflict>
</comment>
<comment type="sequence caution" evidence="1">
    <conflict type="erroneous initiation">
        <sequence resource="EMBL-CDS" id="CAA84041"/>
    </conflict>
</comment>
<sequence length="198" mass="23584">MGDYLSHLEEYVKNLYGRLGITSPHHIDMLKIAKDLDIWVHFEDMGSMMVKYDGMYSIVLNQKKSREEQWEDFGHELCHVLKHAGNHFQMNKLFRELQEFQANQFMYHFCVPTFMLLQMELPQWRSQALATIAAVFRVTKEFADKRLDMFERRKAGIQFQKRLAYLLSHKRPNAYEEGDQQHLQVAEEKALYHIGKNI</sequence>
<feature type="chain" id="PRO_0000066015" description="Phage-like element PBSX protein XkdA">
    <location>
        <begin position="1"/>
        <end position="198"/>
    </location>
</feature>
<feature type="sequence conflict" description="In Ref. 4; CAA94051." evidence="1" ref="4">
    <original>K</original>
    <variation>R</variation>
    <location>
        <position position="63"/>
    </location>
</feature>
<feature type="sequence conflict" description="In Ref. 4; CAA94051." evidence="1" ref="4">
    <original>E</original>
    <variation>A</variation>
    <location>
        <position position="99"/>
    </location>
</feature>
<feature type="sequence conflict" description="In Ref. 1; AAB87518." evidence="1" ref="1">
    <original>R</original>
    <variation>C</variation>
    <location>
        <position position="153"/>
    </location>
</feature>
<protein>
    <recommendedName>
        <fullName>Phage-like element PBSX protein XkdA</fullName>
    </recommendedName>
</protein>
<proteinExistence type="predicted"/>
<organism>
    <name type="scientific">Bacillus subtilis (strain 168)</name>
    <dbReference type="NCBI Taxonomy" id="224308"/>
    <lineage>
        <taxon>Bacteria</taxon>
        <taxon>Bacillati</taxon>
        <taxon>Bacillota</taxon>
        <taxon>Bacilli</taxon>
        <taxon>Bacillales</taxon>
        <taxon>Bacillaceae</taxon>
        <taxon>Bacillus</taxon>
    </lineage>
</organism>
<name>XKDA_BACSU</name>
<dbReference type="EMBL" id="AF034138">
    <property type="protein sequence ID" value="AAB87518.1"/>
    <property type="status" value="ALT_INIT"/>
    <property type="molecule type" value="Genomic_DNA"/>
</dbReference>
<dbReference type="EMBL" id="AL009126">
    <property type="protein sequence ID" value="CAB13107.3"/>
    <property type="molecule type" value="Genomic_DNA"/>
</dbReference>
<dbReference type="EMBL" id="Z70177">
    <property type="protein sequence ID" value="CAA94051.1"/>
    <property type="molecule type" value="Genomic_DNA"/>
</dbReference>
<dbReference type="EMBL" id="Z34287">
    <property type="protein sequence ID" value="CAA84041.1"/>
    <property type="status" value="ALT_INIT"/>
    <property type="molecule type" value="Genomic_DNA"/>
</dbReference>
<dbReference type="EMBL" id="M36478">
    <property type="status" value="NOT_ANNOTATED_CDS"/>
    <property type="molecule type" value="Genomic_DNA"/>
</dbReference>
<dbReference type="PIR" id="A69731">
    <property type="entry name" value="A69731"/>
</dbReference>
<dbReference type="PIR" id="PQ0134">
    <property type="entry name" value="PQ0134"/>
</dbReference>
<dbReference type="RefSeq" id="NP_389132.3">
    <property type="nucleotide sequence ID" value="NC_000964.3"/>
</dbReference>
<dbReference type="RefSeq" id="WP_003232721.1">
    <property type="nucleotide sequence ID" value="NZ_OZ025638.1"/>
</dbReference>
<dbReference type="SMR" id="P39780"/>
<dbReference type="FunCoup" id="P39780">
    <property type="interactions" value="61"/>
</dbReference>
<dbReference type="STRING" id="224308.BSU12500"/>
<dbReference type="PaxDb" id="224308-BSU12500"/>
<dbReference type="EnsemblBacteria" id="CAB13107">
    <property type="protein sequence ID" value="CAB13107"/>
    <property type="gene ID" value="BSU_12500"/>
</dbReference>
<dbReference type="GeneID" id="939838"/>
<dbReference type="KEGG" id="bsu:BSU12500"/>
<dbReference type="PATRIC" id="fig|224308.179.peg.1351"/>
<dbReference type="eggNOG" id="COG2856">
    <property type="taxonomic scope" value="Bacteria"/>
</dbReference>
<dbReference type="InParanoid" id="P39780"/>
<dbReference type="OrthoDB" id="2417909at2"/>
<dbReference type="PhylomeDB" id="P39780"/>
<dbReference type="BioCyc" id="BSUB:BSU12500-MONOMER"/>
<dbReference type="Proteomes" id="UP000001570">
    <property type="component" value="Chromosome"/>
</dbReference>
<dbReference type="Gene3D" id="1.10.10.2910">
    <property type="match status" value="1"/>
</dbReference>
<dbReference type="InterPro" id="IPR010359">
    <property type="entry name" value="IrrE_HExxH"/>
</dbReference>
<dbReference type="Pfam" id="PF06114">
    <property type="entry name" value="Peptidase_M78"/>
    <property type="match status" value="1"/>
</dbReference>
<accession>P39780</accession>
<accession>O34786</accession>